<sequence>MAVRKLKPTSPGRRFQTVSDFEEITRSTPEKSLVIGLTKKSGRNNNGRVTSRRRGGGHKRLYRIIDFRRDKAGIPAKVAHIEYDPNRTARIALLHYADGEKRYILAPVGIRQGDMILSGEGADIKPGNALPMSRIPVGTNLHNIELQPGRGGQFCRAAGTYAQLVAKEGKYALLRLPSGEVRKVLAACCATVGQVGNVNHENISLGKAGRARWLGNRPKVRGVAMNPIDHPLGGGEGRSSGGRHPVSPWGMPTKGYKTRDRKKASSKLIIKRRGQK</sequence>
<proteinExistence type="inferred from homology"/>
<name>RL2_NITV2</name>
<feature type="chain" id="PRO_0000237181" description="Large ribosomal subunit protein uL2">
    <location>
        <begin position="1"/>
        <end position="276"/>
    </location>
</feature>
<feature type="region of interest" description="Disordered" evidence="2">
    <location>
        <begin position="222"/>
        <end position="276"/>
    </location>
</feature>
<feature type="compositionally biased region" description="Basic residues" evidence="2">
    <location>
        <begin position="259"/>
        <end position="276"/>
    </location>
</feature>
<comment type="function">
    <text evidence="1">One of the primary rRNA binding proteins. Required for association of the 30S and 50S subunits to form the 70S ribosome, for tRNA binding and peptide bond formation. It has been suggested to have peptidyltransferase activity; this is somewhat controversial. Makes several contacts with the 16S rRNA in the 70S ribosome.</text>
</comment>
<comment type="subunit">
    <text evidence="1">Part of the 50S ribosomal subunit. Forms a bridge to the 30S subunit in the 70S ribosome.</text>
</comment>
<comment type="similarity">
    <text evidence="1">Belongs to the universal ribosomal protein uL2 family.</text>
</comment>
<dbReference type="EMBL" id="AE017285">
    <property type="protein sequence ID" value="AAS95784.1"/>
    <property type="molecule type" value="Genomic_DNA"/>
</dbReference>
<dbReference type="RefSeq" id="WP_010938601.1">
    <property type="nucleotide sequence ID" value="NC_002937.3"/>
</dbReference>
<dbReference type="RefSeq" id="YP_010525.1">
    <property type="nucleotide sequence ID" value="NC_002937.3"/>
</dbReference>
<dbReference type="SMR" id="Q72CH7"/>
<dbReference type="STRING" id="882.DVU_1306"/>
<dbReference type="PaxDb" id="882-DVU_1306"/>
<dbReference type="EnsemblBacteria" id="AAS95784">
    <property type="protein sequence ID" value="AAS95784"/>
    <property type="gene ID" value="DVU_1306"/>
</dbReference>
<dbReference type="KEGG" id="dvu:DVU_1306"/>
<dbReference type="PATRIC" id="fig|882.5.peg.1218"/>
<dbReference type="eggNOG" id="COG0090">
    <property type="taxonomic scope" value="Bacteria"/>
</dbReference>
<dbReference type="HOGENOM" id="CLU_036235_2_1_7"/>
<dbReference type="OrthoDB" id="9778722at2"/>
<dbReference type="PhylomeDB" id="Q72CH7"/>
<dbReference type="Proteomes" id="UP000002194">
    <property type="component" value="Chromosome"/>
</dbReference>
<dbReference type="GO" id="GO:0015934">
    <property type="term" value="C:large ribosomal subunit"/>
    <property type="evidence" value="ECO:0007669"/>
    <property type="project" value="InterPro"/>
</dbReference>
<dbReference type="GO" id="GO:0019843">
    <property type="term" value="F:rRNA binding"/>
    <property type="evidence" value="ECO:0007669"/>
    <property type="project" value="UniProtKB-UniRule"/>
</dbReference>
<dbReference type="GO" id="GO:0003735">
    <property type="term" value="F:structural constituent of ribosome"/>
    <property type="evidence" value="ECO:0007669"/>
    <property type="project" value="InterPro"/>
</dbReference>
<dbReference type="GO" id="GO:0016740">
    <property type="term" value="F:transferase activity"/>
    <property type="evidence" value="ECO:0007669"/>
    <property type="project" value="InterPro"/>
</dbReference>
<dbReference type="GO" id="GO:0002181">
    <property type="term" value="P:cytoplasmic translation"/>
    <property type="evidence" value="ECO:0007669"/>
    <property type="project" value="TreeGrafter"/>
</dbReference>
<dbReference type="FunFam" id="2.30.30.30:FF:000001">
    <property type="entry name" value="50S ribosomal protein L2"/>
    <property type="match status" value="1"/>
</dbReference>
<dbReference type="FunFam" id="2.40.50.140:FF:000003">
    <property type="entry name" value="50S ribosomal protein L2"/>
    <property type="match status" value="1"/>
</dbReference>
<dbReference type="FunFam" id="4.10.950.10:FF:000001">
    <property type="entry name" value="50S ribosomal protein L2"/>
    <property type="match status" value="1"/>
</dbReference>
<dbReference type="Gene3D" id="2.30.30.30">
    <property type="match status" value="1"/>
</dbReference>
<dbReference type="Gene3D" id="2.40.50.140">
    <property type="entry name" value="Nucleic acid-binding proteins"/>
    <property type="match status" value="1"/>
</dbReference>
<dbReference type="Gene3D" id="4.10.950.10">
    <property type="entry name" value="Ribosomal protein L2, domain 3"/>
    <property type="match status" value="1"/>
</dbReference>
<dbReference type="HAMAP" id="MF_01320_B">
    <property type="entry name" value="Ribosomal_uL2_B"/>
    <property type="match status" value="1"/>
</dbReference>
<dbReference type="InterPro" id="IPR012340">
    <property type="entry name" value="NA-bd_OB-fold"/>
</dbReference>
<dbReference type="InterPro" id="IPR014722">
    <property type="entry name" value="Rib_uL2_dom2"/>
</dbReference>
<dbReference type="InterPro" id="IPR002171">
    <property type="entry name" value="Ribosomal_uL2"/>
</dbReference>
<dbReference type="InterPro" id="IPR005880">
    <property type="entry name" value="Ribosomal_uL2_bac/org-type"/>
</dbReference>
<dbReference type="InterPro" id="IPR022669">
    <property type="entry name" value="Ribosomal_uL2_C"/>
</dbReference>
<dbReference type="InterPro" id="IPR022671">
    <property type="entry name" value="Ribosomal_uL2_CS"/>
</dbReference>
<dbReference type="InterPro" id="IPR014726">
    <property type="entry name" value="Ribosomal_uL2_dom3"/>
</dbReference>
<dbReference type="InterPro" id="IPR022666">
    <property type="entry name" value="Ribosomal_uL2_RNA-bd_dom"/>
</dbReference>
<dbReference type="InterPro" id="IPR008991">
    <property type="entry name" value="Translation_prot_SH3-like_sf"/>
</dbReference>
<dbReference type="NCBIfam" id="TIGR01171">
    <property type="entry name" value="rplB_bact"/>
    <property type="match status" value="1"/>
</dbReference>
<dbReference type="PANTHER" id="PTHR13691:SF5">
    <property type="entry name" value="LARGE RIBOSOMAL SUBUNIT PROTEIN UL2M"/>
    <property type="match status" value="1"/>
</dbReference>
<dbReference type="PANTHER" id="PTHR13691">
    <property type="entry name" value="RIBOSOMAL PROTEIN L2"/>
    <property type="match status" value="1"/>
</dbReference>
<dbReference type="Pfam" id="PF00181">
    <property type="entry name" value="Ribosomal_L2"/>
    <property type="match status" value="1"/>
</dbReference>
<dbReference type="Pfam" id="PF03947">
    <property type="entry name" value="Ribosomal_L2_C"/>
    <property type="match status" value="1"/>
</dbReference>
<dbReference type="PIRSF" id="PIRSF002158">
    <property type="entry name" value="Ribosomal_L2"/>
    <property type="match status" value="1"/>
</dbReference>
<dbReference type="SMART" id="SM01383">
    <property type="entry name" value="Ribosomal_L2"/>
    <property type="match status" value="1"/>
</dbReference>
<dbReference type="SMART" id="SM01382">
    <property type="entry name" value="Ribosomal_L2_C"/>
    <property type="match status" value="1"/>
</dbReference>
<dbReference type="SUPFAM" id="SSF50249">
    <property type="entry name" value="Nucleic acid-binding proteins"/>
    <property type="match status" value="1"/>
</dbReference>
<dbReference type="SUPFAM" id="SSF50104">
    <property type="entry name" value="Translation proteins SH3-like domain"/>
    <property type="match status" value="1"/>
</dbReference>
<dbReference type="PROSITE" id="PS00467">
    <property type="entry name" value="RIBOSOMAL_L2"/>
    <property type="match status" value="1"/>
</dbReference>
<protein>
    <recommendedName>
        <fullName evidence="1">Large ribosomal subunit protein uL2</fullName>
    </recommendedName>
    <alternativeName>
        <fullName evidence="3">50S ribosomal protein L2</fullName>
    </alternativeName>
</protein>
<keyword id="KW-1185">Reference proteome</keyword>
<keyword id="KW-0687">Ribonucleoprotein</keyword>
<keyword id="KW-0689">Ribosomal protein</keyword>
<keyword id="KW-0694">RNA-binding</keyword>
<keyword id="KW-0699">rRNA-binding</keyword>
<organism>
    <name type="scientific">Nitratidesulfovibrio vulgaris (strain ATCC 29579 / DSM 644 / CCUG 34227 / NCIMB 8303 / VKM B-1760 / Hildenborough)</name>
    <name type="common">Desulfovibrio vulgaris</name>
    <dbReference type="NCBI Taxonomy" id="882"/>
    <lineage>
        <taxon>Bacteria</taxon>
        <taxon>Pseudomonadati</taxon>
        <taxon>Thermodesulfobacteriota</taxon>
        <taxon>Desulfovibrionia</taxon>
        <taxon>Desulfovibrionales</taxon>
        <taxon>Desulfovibrionaceae</taxon>
        <taxon>Nitratidesulfovibrio</taxon>
    </lineage>
</organism>
<accession>Q72CH7</accession>
<gene>
    <name evidence="1" type="primary">rplB</name>
    <name type="ordered locus">DVU_1306</name>
</gene>
<evidence type="ECO:0000255" key="1">
    <source>
        <dbReference type="HAMAP-Rule" id="MF_01320"/>
    </source>
</evidence>
<evidence type="ECO:0000256" key="2">
    <source>
        <dbReference type="SAM" id="MobiDB-lite"/>
    </source>
</evidence>
<evidence type="ECO:0000305" key="3"/>
<reference key="1">
    <citation type="journal article" date="2004" name="Nat. Biotechnol.">
        <title>The genome sequence of the anaerobic, sulfate-reducing bacterium Desulfovibrio vulgaris Hildenborough.</title>
        <authorList>
            <person name="Heidelberg J.F."/>
            <person name="Seshadri R."/>
            <person name="Haveman S.A."/>
            <person name="Hemme C.L."/>
            <person name="Paulsen I.T."/>
            <person name="Kolonay J.F."/>
            <person name="Eisen J.A."/>
            <person name="Ward N.L."/>
            <person name="Methe B.A."/>
            <person name="Brinkac L.M."/>
            <person name="Daugherty S.C."/>
            <person name="DeBoy R.T."/>
            <person name="Dodson R.J."/>
            <person name="Durkin A.S."/>
            <person name="Madupu R."/>
            <person name="Nelson W.C."/>
            <person name="Sullivan S.A."/>
            <person name="Fouts D.E."/>
            <person name="Haft D.H."/>
            <person name="Selengut J."/>
            <person name="Peterson J.D."/>
            <person name="Davidsen T.M."/>
            <person name="Zafar N."/>
            <person name="Zhou L."/>
            <person name="Radune D."/>
            <person name="Dimitrov G."/>
            <person name="Hance M."/>
            <person name="Tran K."/>
            <person name="Khouri H.M."/>
            <person name="Gill J."/>
            <person name="Utterback T.R."/>
            <person name="Feldblyum T.V."/>
            <person name="Wall J.D."/>
            <person name="Voordouw G."/>
            <person name="Fraser C.M."/>
        </authorList>
    </citation>
    <scope>NUCLEOTIDE SEQUENCE [LARGE SCALE GENOMIC DNA]</scope>
    <source>
        <strain>ATCC 29579 / DSM 644 / CCUG 34227 / NCIMB 8303 / VKM B-1760 / Hildenborough</strain>
    </source>
</reference>